<evidence type="ECO:0000255" key="1">
    <source>
        <dbReference type="HAMAP-Rule" id="MF_00036"/>
    </source>
</evidence>
<reference key="1">
    <citation type="submission" date="2007-04" db="EMBL/GenBank/DDBJ databases">
        <title>Complete genome sequence of the nitrogen-fixing bacterium Azorhizobium caulinodans ORS571.</title>
        <authorList>
            <person name="Lee K.B."/>
            <person name="Backer P.D."/>
            <person name="Aono T."/>
            <person name="Liu C.T."/>
            <person name="Suzuki S."/>
            <person name="Suzuki T."/>
            <person name="Kaneko T."/>
            <person name="Yamada M."/>
            <person name="Tabata S."/>
            <person name="Kupfer D.M."/>
            <person name="Najar F.Z."/>
            <person name="Wiley G.B."/>
            <person name="Roe B."/>
            <person name="Binnewies T."/>
            <person name="Ussery D."/>
            <person name="Vereecke D."/>
            <person name="Gevers D."/>
            <person name="Holsters M."/>
            <person name="Oyaizu H."/>
        </authorList>
    </citation>
    <scope>NUCLEOTIDE SEQUENCE [LARGE SCALE GENOMIC DNA]</scope>
    <source>
        <strain>ATCC 43989 / DSM 5975 / JCM 20966 / LMG 6465 / NBRC 14845 / NCIMB 13405 / ORS 571</strain>
    </source>
</reference>
<organism>
    <name type="scientific">Azorhizobium caulinodans (strain ATCC 43989 / DSM 5975 / JCM 20966 / LMG 6465 / NBRC 14845 / NCIMB 13405 / ORS 571)</name>
    <dbReference type="NCBI Taxonomy" id="438753"/>
    <lineage>
        <taxon>Bacteria</taxon>
        <taxon>Pseudomonadati</taxon>
        <taxon>Pseudomonadota</taxon>
        <taxon>Alphaproteobacteria</taxon>
        <taxon>Hyphomicrobiales</taxon>
        <taxon>Xanthobacteraceae</taxon>
        <taxon>Azorhizobium</taxon>
    </lineage>
</organism>
<name>SYA_AZOC5</name>
<dbReference type="EC" id="6.1.1.7" evidence="1"/>
<dbReference type="EMBL" id="AP009384">
    <property type="protein sequence ID" value="BAF88852.1"/>
    <property type="molecule type" value="Genomic_DNA"/>
</dbReference>
<dbReference type="RefSeq" id="WP_012171378.1">
    <property type="nucleotide sequence ID" value="NC_009937.1"/>
</dbReference>
<dbReference type="SMR" id="A8ICW8"/>
<dbReference type="STRING" id="438753.AZC_2854"/>
<dbReference type="KEGG" id="azc:AZC_2854"/>
<dbReference type="eggNOG" id="COG0013">
    <property type="taxonomic scope" value="Bacteria"/>
</dbReference>
<dbReference type="HOGENOM" id="CLU_004485_1_1_5"/>
<dbReference type="Proteomes" id="UP000000270">
    <property type="component" value="Chromosome"/>
</dbReference>
<dbReference type="GO" id="GO:0005829">
    <property type="term" value="C:cytosol"/>
    <property type="evidence" value="ECO:0007669"/>
    <property type="project" value="TreeGrafter"/>
</dbReference>
<dbReference type="GO" id="GO:0004813">
    <property type="term" value="F:alanine-tRNA ligase activity"/>
    <property type="evidence" value="ECO:0007669"/>
    <property type="project" value="UniProtKB-UniRule"/>
</dbReference>
<dbReference type="GO" id="GO:0002161">
    <property type="term" value="F:aminoacyl-tRNA deacylase activity"/>
    <property type="evidence" value="ECO:0007669"/>
    <property type="project" value="TreeGrafter"/>
</dbReference>
<dbReference type="GO" id="GO:0005524">
    <property type="term" value="F:ATP binding"/>
    <property type="evidence" value="ECO:0007669"/>
    <property type="project" value="UniProtKB-UniRule"/>
</dbReference>
<dbReference type="GO" id="GO:0000049">
    <property type="term" value="F:tRNA binding"/>
    <property type="evidence" value="ECO:0007669"/>
    <property type="project" value="UniProtKB-KW"/>
</dbReference>
<dbReference type="GO" id="GO:0008270">
    <property type="term" value="F:zinc ion binding"/>
    <property type="evidence" value="ECO:0007669"/>
    <property type="project" value="UniProtKB-UniRule"/>
</dbReference>
<dbReference type="GO" id="GO:0006419">
    <property type="term" value="P:alanyl-tRNA aminoacylation"/>
    <property type="evidence" value="ECO:0007669"/>
    <property type="project" value="UniProtKB-UniRule"/>
</dbReference>
<dbReference type="GO" id="GO:0045892">
    <property type="term" value="P:negative regulation of DNA-templated transcription"/>
    <property type="evidence" value="ECO:0007669"/>
    <property type="project" value="TreeGrafter"/>
</dbReference>
<dbReference type="CDD" id="cd00673">
    <property type="entry name" value="AlaRS_core"/>
    <property type="match status" value="1"/>
</dbReference>
<dbReference type="FunFam" id="2.40.30.130:FF:000001">
    <property type="entry name" value="Alanine--tRNA ligase"/>
    <property type="match status" value="1"/>
</dbReference>
<dbReference type="FunFam" id="3.10.310.40:FF:000001">
    <property type="entry name" value="Alanine--tRNA ligase"/>
    <property type="match status" value="1"/>
</dbReference>
<dbReference type="FunFam" id="3.30.54.20:FF:000001">
    <property type="entry name" value="Alanine--tRNA ligase"/>
    <property type="match status" value="1"/>
</dbReference>
<dbReference type="FunFam" id="3.30.930.10:FF:000004">
    <property type="entry name" value="Alanine--tRNA ligase"/>
    <property type="match status" value="1"/>
</dbReference>
<dbReference type="FunFam" id="3.30.980.10:FF:000004">
    <property type="entry name" value="Alanine--tRNA ligase, cytoplasmic"/>
    <property type="match status" value="1"/>
</dbReference>
<dbReference type="Gene3D" id="2.40.30.130">
    <property type="match status" value="1"/>
</dbReference>
<dbReference type="Gene3D" id="3.10.310.40">
    <property type="match status" value="1"/>
</dbReference>
<dbReference type="Gene3D" id="3.30.54.20">
    <property type="match status" value="1"/>
</dbReference>
<dbReference type="Gene3D" id="6.10.250.550">
    <property type="match status" value="1"/>
</dbReference>
<dbReference type="Gene3D" id="3.30.930.10">
    <property type="entry name" value="Bira Bifunctional Protein, Domain 2"/>
    <property type="match status" value="1"/>
</dbReference>
<dbReference type="Gene3D" id="3.30.980.10">
    <property type="entry name" value="Threonyl-trna Synthetase, Chain A, domain 2"/>
    <property type="match status" value="1"/>
</dbReference>
<dbReference type="HAMAP" id="MF_00036_B">
    <property type="entry name" value="Ala_tRNA_synth_B"/>
    <property type="match status" value="1"/>
</dbReference>
<dbReference type="InterPro" id="IPR045864">
    <property type="entry name" value="aa-tRNA-synth_II/BPL/LPL"/>
</dbReference>
<dbReference type="InterPro" id="IPR002318">
    <property type="entry name" value="Ala-tRNA-lgiase_IIc"/>
</dbReference>
<dbReference type="InterPro" id="IPR018162">
    <property type="entry name" value="Ala-tRNA-ligase_IIc_anticod-bd"/>
</dbReference>
<dbReference type="InterPro" id="IPR018165">
    <property type="entry name" value="Ala-tRNA-synth_IIc_core"/>
</dbReference>
<dbReference type="InterPro" id="IPR018164">
    <property type="entry name" value="Ala-tRNA-synth_IIc_N"/>
</dbReference>
<dbReference type="InterPro" id="IPR050058">
    <property type="entry name" value="Ala-tRNA_ligase"/>
</dbReference>
<dbReference type="InterPro" id="IPR023033">
    <property type="entry name" value="Ala_tRNA_ligase_euk/bac"/>
</dbReference>
<dbReference type="InterPro" id="IPR003156">
    <property type="entry name" value="DHHA1_dom"/>
</dbReference>
<dbReference type="InterPro" id="IPR018163">
    <property type="entry name" value="Thr/Ala-tRNA-synth_IIc_edit"/>
</dbReference>
<dbReference type="InterPro" id="IPR009000">
    <property type="entry name" value="Transl_B-barrel_sf"/>
</dbReference>
<dbReference type="InterPro" id="IPR012947">
    <property type="entry name" value="tRNA_SAD"/>
</dbReference>
<dbReference type="NCBIfam" id="TIGR00344">
    <property type="entry name" value="alaS"/>
    <property type="match status" value="1"/>
</dbReference>
<dbReference type="PANTHER" id="PTHR11777:SF9">
    <property type="entry name" value="ALANINE--TRNA LIGASE, CYTOPLASMIC"/>
    <property type="match status" value="1"/>
</dbReference>
<dbReference type="PANTHER" id="PTHR11777">
    <property type="entry name" value="ALANYL-TRNA SYNTHETASE"/>
    <property type="match status" value="1"/>
</dbReference>
<dbReference type="Pfam" id="PF02272">
    <property type="entry name" value="DHHA1"/>
    <property type="match status" value="1"/>
</dbReference>
<dbReference type="Pfam" id="PF01411">
    <property type="entry name" value="tRNA-synt_2c"/>
    <property type="match status" value="1"/>
</dbReference>
<dbReference type="Pfam" id="PF07973">
    <property type="entry name" value="tRNA_SAD"/>
    <property type="match status" value="1"/>
</dbReference>
<dbReference type="PRINTS" id="PR00980">
    <property type="entry name" value="TRNASYNTHALA"/>
</dbReference>
<dbReference type="SMART" id="SM00863">
    <property type="entry name" value="tRNA_SAD"/>
    <property type="match status" value="1"/>
</dbReference>
<dbReference type="SUPFAM" id="SSF55681">
    <property type="entry name" value="Class II aaRS and biotin synthetases"/>
    <property type="match status" value="1"/>
</dbReference>
<dbReference type="SUPFAM" id="SSF101353">
    <property type="entry name" value="Putative anticodon-binding domain of alanyl-tRNA synthetase (AlaRS)"/>
    <property type="match status" value="1"/>
</dbReference>
<dbReference type="SUPFAM" id="SSF55186">
    <property type="entry name" value="ThrRS/AlaRS common domain"/>
    <property type="match status" value="1"/>
</dbReference>
<dbReference type="SUPFAM" id="SSF50447">
    <property type="entry name" value="Translation proteins"/>
    <property type="match status" value="1"/>
</dbReference>
<dbReference type="PROSITE" id="PS50860">
    <property type="entry name" value="AA_TRNA_LIGASE_II_ALA"/>
    <property type="match status" value="1"/>
</dbReference>
<sequence length="881" mass="94871">MSGVNEIRSSFIDYFVKNGHEAVASSPLVPRNDPTLMFTNAGMVQFKNVFTGVEKRPYSRAVTAQKCVRAGGKHNDLDNVGYTARHHTFFEMLGNFSFGDYFKDRAIELAWNLITKEWDLPKDRLLATVYYDDDVAYDLWKKVAGLPDSRIIRIPTSDNFWAMGDTGPCGPCSEIFFDHGDHIPGGPPGSPDEDGDRFIEIWNLVFMQYEQLPGERLNLPRPSIDTGMGLERISALLQGTHDNYETDLMRAIIAEVQELTNVPSNGPQKASHRVIADHLRSSVFLVADGVLPSNEGRGYVLRRIMRRAMRHAQLLGAREPLMHRLVPVLVREMGRAYPEIVRAEALATETLLLEETRFRRTLERGLSLLEEESAGLVSGARFPGEVAFKLYDTYGFPLDLTEDALRGRGIEVEREAFDAAMERQKAEARANWSGSGEAATDTVWFGVREREGATEFLGYDTETAEGAVRALVQEGKEVSELPAGARGFVVLNQTPFYGESGGQVGDSGLVSGEGVKACVLNTQKKLGDVFVHDVEVTEGTLKIGTPLALEVDHARRSAVRANHSATHLLHEALRRVLGDHVAQKGSLVAPDRLRFDFSHPKPLTADELAQVEDIANTYVLRNEPVETRLMAVDDAVASGARALFGEKYGDEVRVVSMGTDSGNGAPFSVELCGGTHVKRTGDIGIVTVLADSGVAAGVRRLEALTATAARRHLNAASTALQTTAGTLKVSTAEVEARVAALVEERRKLERDLAEARKKLAMGGGGESGPAVIEVNGTRYLRIAISGADPKDLKAIVDEGKTKIGSGVVAVANTAADGKGALVVGVTADLAGKFDAQKLVRIGVEVLGGKGGGGRPDMAQGGGPDGAKADAALAAIESALGA</sequence>
<gene>
    <name evidence="1" type="primary">alaS</name>
    <name type="ordered locus">AZC_2854</name>
</gene>
<proteinExistence type="inferred from homology"/>
<accession>A8ICW8</accession>
<protein>
    <recommendedName>
        <fullName evidence="1">Alanine--tRNA ligase</fullName>
        <ecNumber evidence="1">6.1.1.7</ecNumber>
    </recommendedName>
    <alternativeName>
        <fullName evidence="1">Alanyl-tRNA synthetase</fullName>
        <shortName evidence="1">AlaRS</shortName>
    </alternativeName>
</protein>
<keyword id="KW-0030">Aminoacyl-tRNA synthetase</keyword>
<keyword id="KW-0067">ATP-binding</keyword>
<keyword id="KW-0963">Cytoplasm</keyword>
<keyword id="KW-0436">Ligase</keyword>
<keyword id="KW-0479">Metal-binding</keyword>
<keyword id="KW-0547">Nucleotide-binding</keyword>
<keyword id="KW-0648">Protein biosynthesis</keyword>
<keyword id="KW-1185">Reference proteome</keyword>
<keyword id="KW-0694">RNA-binding</keyword>
<keyword id="KW-0820">tRNA-binding</keyword>
<keyword id="KW-0862">Zinc</keyword>
<comment type="function">
    <text evidence="1">Catalyzes the attachment of alanine to tRNA(Ala) in a two-step reaction: alanine is first activated by ATP to form Ala-AMP and then transferred to the acceptor end of tRNA(Ala). Also edits incorrectly charged Ser-tRNA(Ala) and Gly-tRNA(Ala) via its editing domain.</text>
</comment>
<comment type="catalytic activity">
    <reaction evidence="1">
        <text>tRNA(Ala) + L-alanine + ATP = L-alanyl-tRNA(Ala) + AMP + diphosphate</text>
        <dbReference type="Rhea" id="RHEA:12540"/>
        <dbReference type="Rhea" id="RHEA-COMP:9657"/>
        <dbReference type="Rhea" id="RHEA-COMP:9923"/>
        <dbReference type="ChEBI" id="CHEBI:30616"/>
        <dbReference type="ChEBI" id="CHEBI:33019"/>
        <dbReference type="ChEBI" id="CHEBI:57972"/>
        <dbReference type="ChEBI" id="CHEBI:78442"/>
        <dbReference type="ChEBI" id="CHEBI:78497"/>
        <dbReference type="ChEBI" id="CHEBI:456215"/>
        <dbReference type="EC" id="6.1.1.7"/>
    </reaction>
</comment>
<comment type="cofactor">
    <cofactor evidence="1">
        <name>Zn(2+)</name>
        <dbReference type="ChEBI" id="CHEBI:29105"/>
    </cofactor>
    <text evidence="1">Binds 1 zinc ion per subunit.</text>
</comment>
<comment type="subcellular location">
    <subcellularLocation>
        <location evidence="1">Cytoplasm</location>
    </subcellularLocation>
</comment>
<comment type="domain">
    <text evidence="1">Consists of three domains; the N-terminal catalytic domain, the editing domain and the C-terminal C-Ala domain. The editing domain removes incorrectly charged amino acids, while the C-Ala domain, along with tRNA(Ala), serves as a bridge to cooperatively bring together the editing and aminoacylation centers thus stimulating deacylation of misacylated tRNAs.</text>
</comment>
<comment type="similarity">
    <text evidence="1">Belongs to the class-II aminoacyl-tRNA synthetase family.</text>
</comment>
<feature type="chain" id="PRO_0000347496" description="Alanine--tRNA ligase">
    <location>
        <begin position="1"/>
        <end position="881"/>
    </location>
</feature>
<feature type="binding site" evidence="1">
    <location>
        <position position="563"/>
    </location>
    <ligand>
        <name>Zn(2+)</name>
        <dbReference type="ChEBI" id="CHEBI:29105"/>
    </ligand>
</feature>
<feature type="binding site" evidence="1">
    <location>
        <position position="567"/>
    </location>
    <ligand>
        <name>Zn(2+)</name>
        <dbReference type="ChEBI" id="CHEBI:29105"/>
    </ligand>
</feature>
<feature type="binding site" evidence="1">
    <location>
        <position position="672"/>
    </location>
    <ligand>
        <name>Zn(2+)</name>
        <dbReference type="ChEBI" id="CHEBI:29105"/>
    </ligand>
</feature>
<feature type="binding site" evidence="1">
    <location>
        <position position="676"/>
    </location>
    <ligand>
        <name>Zn(2+)</name>
        <dbReference type="ChEBI" id="CHEBI:29105"/>
    </ligand>
</feature>